<keyword id="KW-0004">4Fe-4S</keyword>
<keyword id="KW-0067">ATP-binding</keyword>
<keyword id="KW-0963">Cytoplasm</keyword>
<keyword id="KW-0408">Iron</keyword>
<keyword id="KW-0411">Iron-sulfur</keyword>
<keyword id="KW-0479">Metal-binding</keyword>
<keyword id="KW-0547">Nucleotide-binding</keyword>
<keyword id="KW-1185">Reference proteome</keyword>
<dbReference type="EMBL" id="CH963920">
    <property type="protein sequence ID" value="EDW78113.1"/>
    <property type="molecule type" value="Genomic_DNA"/>
</dbReference>
<dbReference type="SMR" id="B4N1C3"/>
<dbReference type="STRING" id="7260.B4N1C3"/>
<dbReference type="EnsemblMetazoa" id="FBtr0255477">
    <property type="protein sequence ID" value="FBpp0253969"/>
    <property type="gene ID" value="FBgn0226785"/>
</dbReference>
<dbReference type="EnsemblMetazoa" id="XM_002067091.3">
    <property type="protein sequence ID" value="XP_002067127.1"/>
    <property type="gene ID" value="LOC6643753"/>
</dbReference>
<dbReference type="GeneID" id="6643753"/>
<dbReference type="KEGG" id="dwi:6643753"/>
<dbReference type="CTD" id="4682"/>
<dbReference type="eggNOG" id="KOG3022">
    <property type="taxonomic scope" value="Eukaryota"/>
</dbReference>
<dbReference type="HOGENOM" id="CLU_024839_0_1_1"/>
<dbReference type="OMA" id="VSGCPMR"/>
<dbReference type="OrthoDB" id="1741334at2759"/>
<dbReference type="PhylomeDB" id="B4N1C3"/>
<dbReference type="Proteomes" id="UP000007798">
    <property type="component" value="Unassembled WGS sequence"/>
</dbReference>
<dbReference type="GO" id="GO:0005829">
    <property type="term" value="C:cytosol"/>
    <property type="evidence" value="ECO:0000250"/>
    <property type="project" value="UniProtKB"/>
</dbReference>
<dbReference type="GO" id="GO:0051539">
    <property type="term" value="F:4 iron, 4 sulfur cluster binding"/>
    <property type="evidence" value="ECO:0007669"/>
    <property type="project" value="UniProtKB-UniRule"/>
</dbReference>
<dbReference type="GO" id="GO:0005524">
    <property type="term" value="F:ATP binding"/>
    <property type="evidence" value="ECO:0007669"/>
    <property type="project" value="UniProtKB-KW"/>
</dbReference>
<dbReference type="GO" id="GO:0140663">
    <property type="term" value="F:ATP-dependent FeS chaperone activity"/>
    <property type="evidence" value="ECO:0007669"/>
    <property type="project" value="InterPro"/>
</dbReference>
<dbReference type="GO" id="GO:0051536">
    <property type="term" value="F:iron-sulfur cluster binding"/>
    <property type="evidence" value="ECO:0000250"/>
    <property type="project" value="UniProtKB"/>
</dbReference>
<dbReference type="GO" id="GO:0046872">
    <property type="term" value="F:metal ion binding"/>
    <property type="evidence" value="ECO:0007669"/>
    <property type="project" value="UniProtKB-KW"/>
</dbReference>
<dbReference type="GO" id="GO:0016226">
    <property type="term" value="P:iron-sulfur cluster assembly"/>
    <property type="evidence" value="ECO:0000250"/>
    <property type="project" value="UniProtKB"/>
</dbReference>
<dbReference type="CDD" id="cd02037">
    <property type="entry name" value="Mrp_NBP35"/>
    <property type="match status" value="1"/>
</dbReference>
<dbReference type="FunFam" id="3.40.50.300:FF:001759">
    <property type="entry name" value="Cytosolic Fe-S cluster assembly factor NUBP1 homolog"/>
    <property type="match status" value="1"/>
</dbReference>
<dbReference type="Gene3D" id="3.40.50.300">
    <property type="entry name" value="P-loop containing nucleotide triphosphate hydrolases"/>
    <property type="match status" value="1"/>
</dbReference>
<dbReference type="HAMAP" id="MF_02040">
    <property type="entry name" value="Mrp_NBP35"/>
    <property type="match status" value="1"/>
</dbReference>
<dbReference type="HAMAP" id="MF_03038">
    <property type="entry name" value="NUBP1"/>
    <property type="match status" value="1"/>
</dbReference>
<dbReference type="InterPro" id="IPR019591">
    <property type="entry name" value="Mrp/NBP35_ATP-bd"/>
</dbReference>
<dbReference type="InterPro" id="IPR028601">
    <property type="entry name" value="NUBP1/Nbp35"/>
</dbReference>
<dbReference type="InterPro" id="IPR027417">
    <property type="entry name" value="P-loop_NTPase"/>
</dbReference>
<dbReference type="InterPro" id="IPR033756">
    <property type="entry name" value="YlxH/NBP35"/>
</dbReference>
<dbReference type="PANTHER" id="PTHR23264:SF35">
    <property type="entry name" value="CYTOSOLIC FE-S CLUSTER ASSEMBLY FACTOR NUBP1"/>
    <property type="match status" value="1"/>
</dbReference>
<dbReference type="PANTHER" id="PTHR23264">
    <property type="entry name" value="NUCLEOTIDE-BINDING PROTEIN NBP35 YEAST -RELATED"/>
    <property type="match status" value="1"/>
</dbReference>
<dbReference type="Pfam" id="PF10609">
    <property type="entry name" value="ParA"/>
    <property type="match status" value="1"/>
</dbReference>
<dbReference type="SUPFAM" id="SSF52540">
    <property type="entry name" value="P-loop containing nucleoside triphosphate hydrolases"/>
    <property type="match status" value="1"/>
</dbReference>
<gene>
    <name evidence="1" type="primary">Nubp1</name>
    <name type="ORF">GK24826</name>
</gene>
<evidence type="ECO:0000250" key="1">
    <source>
        <dbReference type="UniProtKB" id="Q9VJI9"/>
    </source>
</evidence>
<evidence type="ECO:0000255" key="2">
    <source>
        <dbReference type="HAMAP-Rule" id="MF_03038"/>
    </source>
</evidence>
<reference key="1">
    <citation type="journal article" date="2007" name="Nature">
        <title>Evolution of genes and genomes on the Drosophila phylogeny.</title>
        <authorList>
            <consortium name="Drosophila 12 genomes consortium"/>
        </authorList>
    </citation>
    <scope>NUCLEOTIDE SEQUENCE [LARGE SCALE GENOMIC DNA]</scope>
    <source>
        <strain>Tucson 14030-0811.24</strain>
    </source>
</reference>
<accession>B4N1C3</accession>
<comment type="function">
    <text evidence="2">Component of the cytosolic iron-sulfur (Fe/S) protein assembly (CIA) machinery. Required for maturation of extramitochondrial Fe-S proteins. The Nubp1-Nubp2 heterotetramer forms a Fe-S scaffold complex, mediating the de novo assembly of an Fe-S cluster and its transfer to target apoproteins.</text>
</comment>
<comment type="cofactor">
    <cofactor evidence="2">
        <name>[4Fe-4S] cluster</name>
        <dbReference type="ChEBI" id="CHEBI:49883"/>
    </cofactor>
    <text evidence="2">Binds 4 [4Fe-4S] clusters per heterotetramer. Contains two stable clusters in the N-termini of Nubp1 and two labile, bridging clusters between subunits of the Nubp1-Nubp2 heterotetramer.</text>
</comment>
<comment type="subunit">
    <text evidence="2">Heterotetramer of 2 Nubp1 and 2 Nubp2 chains.</text>
</comment>
<comment type="subcellular location">
    <subcellularLocation>
        <location evidence="2">Cytoplasm</location>
    </subcellularLocation>
</comment>
<comment type="similarity">
    <text evidence="2">Belongs to the Mrp/NBP35 ATP-binding proteins family. NUBP1/NBP35 subfamily.</text>
</comment>
<organism>
    <name type="scientific">Drosophila willistoni</name>
    <name type="common">Fruit fly</name>
    <dbReference type="NCBI Taxonomy" id="7260"/>
    <lineage>
        <taxon>Eukaryota</taxon>
        <taxon>Metazoa</taxon>
        <taxon>Ecdysozoa</taxon>
        <taxon>Arthropoda</taxon>
        <taxon>Hexapoda</taxon>
        <taxon>Insecta</taxon>
        <taxon>Pterygota</taxon>
        <taxon>Neoptera</taxon>
        <taxon>Endopterygota</taxon>
        <taxon>Diptera</taxon>
        <taxon>Brachycera</taxon>
        <taxon>Muscomorpha</taxon>
        <taxon>Ephydroidea</taxon>
        <taxon>Drosophilidae</taxon>
        <taxon>Drosophila</taxon>
        <taxon>Sophophora</taxon>
    </lineage>
</organism>
<feature type="chain" id="PRO_0000382611" description="Cytosolic Fe-S cluster assembly factor Nubp1 homolog">
    <location>
        <begin position="1"/>
        <end position="310"/>
    </location>
</feature>
<feature type="binding site" evidence="2">
    <location>
        <position position="8"/>
    </location>
    <ligand>
        <name>[4Fe-4S] cluster</name>
        <dbReference type="ChEBI" id="CHEBI:49883"/>
        <label>1</label>
    </ligand>
</feature>
<feature type="binding site" evidence="2">
    <location>
        <position position="22"/>
    </location>
    <ligand>
        <name>[4Fe-4S] cluster</name>
        <dbReference type="ChEBI" id="CHEBI:49883"/>
        <label>1</label>
    </ligand>
</feature>
<feature type="binding site" evidence="2">
    <location>
        <position position="25"/>
    </location>
    <ligand>
        <name>[4Fe-4S] cluster</name>
        <dbReference type="ChEBI" id="CHEBI:49883"/>
        <label>1</label>
    </ligand>
</feature>
<feature type="binding site" evidence="2">
    <location>
        <position position="31"/>
    </location>
    <ligand>
        <name>[4Fe-4S] cluster</name>
        <dbReference type="ChEBI" id="CHEBI:49883"/>
        <label>1</label>
    </ligand>
</feature>
<feature type="binding site" evidence="2">
    <location>
        <begin position="62"/>
        <end position="69"/>
    </location>
    <ligand>
        <name>ATP</name>
        <dbReference type="ChEBI" id="CHEBI:30616"/>
    </ligand>
</feature>
<feature type="binding site" evidence="2">
    <location>
        <position position="239"/>
    </location>
    <ligand>
        <name>[4Fe-4S] cluster</name>
        <dbReference type="ChEBI" id="CHEBI:49883"/>
        <label>2</label>
        <note>ligand shared with heterodimeric partner</note>
    </ligand>
</feature>
<feature type="binding site" evidence="2">
    <location>
        <position position="242"/>
    </location>
    <ligand>
        <name>[4Fe-4S] cluster</name>
        <dbReference type="ChEBI" id="CHEBI:49883"/>
        <label>2</label>
        <note>ligand shared with heterodimeric partner</note>
    </ligand>
</feature>
<protein>
    <recommendedName>
        <fullName evidence="2">Cytosolic Fe-S cluster assembly factor Nubp1 homolog</fullName>
    </recommendedName>
</protein>
<name>NUBP1_DROWI</name>
<sequence>MEAPPEHCPGVESEQAGRVSACAGCPNQSICSDPNKKLEDPGKALVAAALKDVKHKLLILSGKGGVGKSTVTTLLTRYLARSCPDNNFGVLDIDICGPSQPRLLGAVGENVHQSGSGWSPVGIDDNVCLMSIGFLLGSVDDAIIWRGPKKNGMIRQFLSEVDWGNLDLLLLDTPPGTSDEHLSVVSYLKNDEIPNSVRAIIVTTPQEVALLDVRKEINFCKKQGIPIVGVVENMSSFRCGHCGNSSEIFPAKTGGAAAMCTEMEVPLLGSLPLDPLIAKACDSGEDITAMKNPTTEALAAICTRIMDSFN</sequence>
<proteinExistence type="inferred from homology"/>